<evidence type="ECO:0000255" key="1">
    <source>
        <dbReference type="HAMAP-Rule" id="MF_00158"/>
    </source>
</evidence>
<comment type="function">
    <text evidence="1">Catalyzes the condensation of pantoate with beta-alanine in an ATP-dependent reaction via a pantoyl-adenylate intermediate.</text>
</comment>
<comment type="catalytic activity">
    <reaction evidence="1">
        <text>(R)-pantoate + beta-alanine + ATP = (R)-pantothenate + AMP + diphosphate + H(+)</text>
        <dbReference type="Rhea" id="RHEA:10912"/>
        <dbReference type="ChEBI" id="CHEBI:15378"/>
        <dbReference type="ChEBI" id="CHEBI:15980"/>
        <dbReference type="ChEBI" id="CHEBI:29032"/>
        <dbReference type="ChEBI" id="CHEBI:30616"/>
        <dbReference type="ChEBI" id="CHEBI:33019"/>
        <dbReference type="ChEBI" id="CHEBI:57966"/>
        <dbReference type="ChEBI" id="CHEBI:456215"/>
        <dbReference type="EC" id="6.3.2.1"/>
    </reaction>
</comment>
<comment type="pathway">
    <text evidence="1">Cofactor biosynthesis; (R)-pantothenate biosynthesis; (R)-pantothenate from (R)-pantoate and beta-alanine: step 1/1.</text>
</comment>
<comment type="subunit">
    <text evidence="1">Homodimer.</text>
</comment>
<comment type="subcellular location">
    <subcellularLocation>
        <location evidence="1">Cytoplasm</location>
    </subcellularLocation>
</comment>
<comment type="miscellaneous">
    <text evidence="1">The reaction proceeds by a bi uni uni bi ping pong mechanism.</text>
</comment>
<comment type="similarity">
    <text evidence="1">Belongs to the pantothenate synthetase family.</text>
</comment>
<sequence>MQIINDPTEMQKTAESLRLKHQFIAVVMTMGALHEGHLSLIKLAKERAGSVILTIFVNPRQFGPEEDFQRYPRPLEKDASMARSAGVDYLFAPDPELIYPEAFQTQVSTGDIATRFEGAARPGHFDGMATVVLKLLLLSKAHLAVFGEKDAQQLAVIKQMVRDFNIDTTILGAPTVRESDGLAISSRNIYLSSEERKQATVLNESMCRARELLHMKQTDCKLIIEEVTKVIASAPDAIIDYATIVDESNFRETAILKPDINYLLLLAVKIGSTRLIDNGVLRVSQQDV</sequence>
<protein>
    <recommendedName>
        <fullName evidence="1">Pantothenate synthetase</fullName>
        <shortName evidence="1">PS</shortName>
        <ecNumber evidence="1">6.3.2.1</ecNumber>
    </recommendedName>
    <alternativeName>
        <fullName evidence="1">Pantoate--beta-alanine ligase</fullName>
    </alternativeName>
    <alternativeName>
        <fullName evidence="1">Pantoate-activating enzyme</fullName>
    </alternativeName>
</protein>
<keyword id="KW-0067">ATP-binding</keyword>
<keyword id="KW-0963">Cytoplasm</keyword>
<keyword id="KW-0436">Ligase</keyword>
<keyword id="KW-0547">Nucleotide-binding</keyword>
<keyword id="KW-0566">Pantothenate biosynthesis</keyword>
<gene>
    <name evidence="1" type="primary">panC</name>
    <name type="ordered locus">Cphamn1_0553</name>
</gene>
<feature type="chain" id="PRO_1000097047" description="Pantothenate synthetase">
    <location>
        <begin position="1"/>
        <end position="288"/>
    </location>
</feature>
<feature type="active site" description="Proton donor" evidence="1">
    <location>
        <position position="37"/>
    </location>
</feature>
<feature type="binding site" evidence="1">
    <location>
        <begin position="30"/>
        <end position="37"/>
    </location>
    <ligand>
        <name>ATP</name>
        <dbReference type="ChEBI" id="CHEBI:30616"/>
    </ligand>
</feature>
<feature type="binding site" evidence="1">
    <location>
        <position position="61"/>
    </location>
    <ligand>
        <name>(R)-pantoate</name>
        <dbReference type="ChEBI" id="CHEBI:15980"/>
    </ligand>
</feature>
<feature type="binding site" evidence="1">
    <location>
        <position position="61"/>
    </location>
    <ligand>
        <name>beta-alanine</name>
        <dbReference type="ChEBI" id="CHEBI:57966"/>
    </ligand>
</feature>
<feature type="binding site" evidence="1">
    <location>
        <begin position="147"/>
        <end position="150"/>
    </location>
    <ligand>
        <name>ATP</name>
        <dbReference type="ChEBI" id="CHEBI:30616"/>
    </ligand>
</feature>
<feature type="binding site" evidence="1">
    <location>
        <position position="153"/>
    </location>
    <ligand>
        <name>(R)-pantoate</name>
        <dbReference type="ChEBI" id="CHEBI:15980"/>
    </ligand>
</feature>
<feature type="binding site" evidence="1">
    <location>
        <position position="176"/>
    </location>
    <ligand>
        <name>ATP</name>
        <dbReference type="ChEBI" id="CHEBI:30616"/>
    </ligand>
</feature>
<feature type="binding site" evidence="1">
    <location>
        <begin position="184"/>
        <end position="187"/>
    </location>
    <ligand>
        <name>ATP</name>
        <dbReference type="ChEBI" id="CHEBI:30616"/>
    </ligand>
</feature>
<reference key="1">
    <citation type="submission" date="2008-06" db="EMBL/GenBank/DDBJ databases">
        <title>Complete sequence of Chlorobium phaeobacteroides BS1.</title>
        <authorList>
            <consortium name="US DOE Joint Genome Institute"/>
            <person name="Lucas S."/>
            <person name="Copeland A."/>
            <person name="Lapidus A."/>
            <person name="Glavina del Rio T."/>
            <person name="Dalin E."/>
            <person name="Tice H."/>
            <person name="Bruce D."/>
            <person name="Goodwin L."/>
            <person name="Pitluck S."/>
            <person name="Schmutz J."/>
            <person name="Larimer F."/>
            <person name="Land M."/>
            <person name="Hauser L."/>
            <person name="Kyrpides N."/>
            <person name="Ovchinnikova G."/>
            <person name="Li T."/>
            <person name="Liu Z."/>
            <person name="Zhao F."/>
            <person name="Overmann J."/>
            <person name="Bryant D.A."/>
            <person name="Richardson P."/>
        </authorList>
    </citation>
    <scope>NUCLEOTIDE SEQUENCE [LARGE SCALE GENOMIC DNA]</scope>
    <source>
        <strain>BS1</strain>
    </source>
</reference>
<dbReference type="EC" id="6.3.2.1" evidence="1"/>
<dbReference type="EMBL" id="CP001101">
    <property type="protein sequence ID" value="ACE03515.1"/>
    <property type="molecule type" value="Genomic_DNA"/>
</dbReference>
<dbReference type="SMR" id="B3EMN7"/>
<dbReference type="STRING" id="331678.Cphamn1_0553"/>
<dbReference type="KEGG" id="cpb:Cphamn1_0553"/>
<dbReference type="eggNOG" id="COG0414">
    <property type="taxonomic scope" value="Bacteria"/>
</dbReference>
<dbReference type="HOGENOM" id="CLU_047148_0_0_10"/>
<dbReference type="OrthoDB" id="9773087at2"/>
<dbReference type="UniPathway" id="UPA00028">
    <property type="reaction ID" value="UER00005"/>
</dbReference>
<dbReference type="GO" id="GO:0005829">
    <property type="term" value="C:cytosol"/>
    <property type="evidence" value="ECO:0007669"/>
    <property type="project" value="TreeGrafter"/>
</dbReference>
<dbReference type="GO" id="GO:0005524">
    <property type="term" value="F:ATP binding"/>
    <property type="evidence" value="ECO:0007669"/>
    <property type="project" value="UniProtKB-KW"/>
</dbReference>
<dbReference type="GO" id="GO:0004592">
    <property type="term" value="F:pantoate-beta-alanine ligase activity"/>
    <property type="evidence" value="ECO:0007669"/>
    <property type="project" value="UniProtKB-UniRule"/>
</dbReference>
<dbReference type="GO" id="GO:0015940">
    <property type="term" value="P:pantothenate biosynthetic process"/>
    <property type="evidence" value="ECO:0007669"/>
    <property type="project" value="UniProtKB-UniRule"/>
</dbReference>
<dbReference type="CDD" id="cd00560">
    <property type="entry name" value="PanC"/>
    <property type="match status" value="1"/>
</dbReference>
<dbReference type="Gene3D" id="3.40.50.620">
    <property type="entry name" value="HUPs"/>
    <property type="match status" value="1"/>
</dbReference>
<dbReference type="Gene3D" id="3.30.1300.10">
    <property type="entry name" value="Pantoate-beta-alanine ligase, C-terminal domain"/>
    <property type="match status" value="1"/>
</dbReference>
<dbReference type="HAMAP" id="MF_00158">
    <property type="entry name" value="PanC"/>
    <property type="match status" value="1"/>
</dbReference>
<dbReference type="InterPro" id="IPR004821">
    <property type="entry name" value="Cyt_trans-like"/>
</dbReference>
<dbReference type="InterPro" id="IPR003721">
    <property type="entry name" value="Pantoate_ligase"/>
</dbReference>
<dbReference type="InterPro" id="IPR042176">
    <property type="entry name" value="Pantoate_ligase_C"/>
</dbReference>
<dbReference type="InterPro" id="IPR014729">
    <property type="entry name" value="Rossmann-like_a/b/a_fold"/>
</dbReference>
<dbReference type="NCBIfam" id="TIGR00125">
    <property type="entry name" value="cyt_tran_rel"/>
    <property type="match status" value="1"/>
</dbReference>
<dbReference type="NCBIfam" id="TIGR00018">
    <property type="entry name" value="panC"/>
    <property type="match status" value="1"/>
</dbReference>
<dbReference type="PANTHER" id="PTHR21299">
    <property type="entry name" value="CYTIDYLATE KINASE/PANTOATE-BETA-ALANINE LIGASE"/>
    <property type="match status" value="1"/>
</dbReference>
<dbReference type="PANTHER" id="PTHR21299:SF1">
    <property type="entry name" value="PANTOATE--BETA-ALANINE LIGASE"/>
    <property type="match status" value="1"/>
</dbReference>
<dbReference type="Pfam" id="PF02569">
    <property type="entry name" value="Pantoate_ligase"/>
    <property type="match status" value="1"/>
</dbReference>
<dbReference type="SUPFAM" id="SSF52374">
    <property type="entry name" value="Nucleotidylyl transferase"/>
    <property type="match status" value="1"/>
</dbReference>
<name>PANC_CHLPB</name>
<proteinExistence type="inferred from homology"/>
<accession>B3EMN7</accession>
<organism>
    <name type="scientific">Chlorobium phaeobacteroides (strain BS1)</name>
    <dbReference type="NCBI Taxonomy" id="331678"/>
    <lineage>
        <taxon>Bacteria</taxon>
        <taxon>Pseudomonadati</taxon>
        <taxon>Chlorobiota</taxon>
        <taxon>Chlorobiia</taxon>
        <taxon>Chlorobiales</taxon>
        <taxon>Chlorobiaceae</taxon>
        <taxon>Chlorobium/Pelodictyon group</taxon>
        <taxon>Chlorobium</taxon>
    </lineage>
</organism>